<reference key="1">
    <citation type="journal article" date="1995" name="J. Biol. Chem.">
        <title>Identification and functional expression of a receptor selectively recognizing parathyroid hormone, the PTH2 receptor.</title>
        <authorList>
            <person name="Usdin T.B."/>
            <person name="Gruber C."/>
            <person name="Bonner T.I."/>
        </authorList>
    </citation>
    <scope>NUCLEOTIDE SEQUENCE [MRNA]</scope>
    <scope>TISSUE SPECIFICITY</scope>
    <source>
        <tissue>Brain</tissue>
    </source>
</reference>
<reference key="2">
    <citation type="submission" date="2003-12" db="EMBL/GenBank/DDBJ databases">
        <title>cDNA clones of human proteins involved in signal transduction sequenced by the Guthrie cDNA resource center (www.cdna.org).</title>
        <authorList>
            <person name="King M.M."/>
            <person name="Aronstam R.S."/>
            <person name="Sharma S.V."/>
        </authorList>
    </citation>
    <scope>NUCLEOTIDE SEQUENCE [LARGE SCALE MRNA]</scope>
    <source>
        <tissue>Retina</tissue>
    </source>
</reference>
<reference key="3">
    <citation type="journal article" date="2004" name="Genome Res.">
        <title>The status, quality, and expansion of the NIH full-length cDNA project: the Mammalian Gene Collection (MGC).</title>
        <authorList>
            <consortium name="The MGC Project Team"/>
        </authorList>
    </citation>
    <scope>NUCLEOTIDE SEQUENCE [LARGE SCALE MRNA]</scope>
    <source>
        <tissue>Brain</tissue>
    </source>
</reference>
<reference key="4">
    <citation type="journal article" date="1996" name="Genomics">
        <title>Assignment of the human PTH2 receptor gene (PTHR2) to chromosome 2q33 by fluorescence in situ hybridization.</title>
        <authorList>
            <person name="Usdin T.B."/>
            <person name="Modi W."/>
            <person name="Bonner T.I."/>
        </authorList>
    </citation>
    <scope>NUCLEOTIDE SEQUENCE [GENOMIC DNA] OF 26-40 AND 306-550</scope>
</reference>
<reference key="5">
    <citation type="journal article" date="2002" name="Endocrinology">
        <title>Identification and characterization of the murine and human gene encoding the tuberoinfundibular peptide of 39 residues.</title>
        <authorList>
            <person name="John M.R."/>
            <person name="Arai M."/>
            <person name="Rubin D.A."/>
            <person name="Jonsson K.B."/>
            <person name="Jueppner H."/>
        </authorList>
    </citation>
    <scope>INTERACTION WITH TIPF39/TI39</scope>
</reference>
<proteinExistence type="evidence at protein level"/>
<evidence type="ECO:0000250" key="1"/>
<evidence type="ECO:0000255" key="2"/>
<evidence type="ECO:0000256" key="3">
    <source>
        <dbReference type="SAM" id="MobiDB-lite"/>
    </source>
</evidence>
<evidence type="ECO:0000269" key="4">
    <source>
    </source>
</evidence>
<evidence type="ECO:0000305" key="5"/>
<evidence type="ECO:0007829" key="6">
    <source>
        <dbReference type="PDB" id="7F16"/>
    </source>
</evidence>
<keyword id="KW-0002">3D-structure</keyword>
<keyword id="KW-1003">Cell membrane</keyword>
<keyword id="KW-0297">G-protein coupled receptor</keyword>
<keyword id="KW-0325">Glycoprotein</keyword>
<keyword id="KW-0472">Membrane</keyword>
<keyword id="KW-0675">Receptor</keyword>
<keyword id="KW-1185">Reference proteome</keyword>
<keyword id="KW-0732">Signal</keyword>
<keyword id="KW-0807">Transducer</keyword>
<keyword id="KW-0812">Transmembrane</keyword>
<keyword id="KW-1133">Transmembrane helix</keyword>
<sequence length="550" mass="62236">MAGLGASLHVWGWLMLGSCLLARAQLDSDGTITIEEQIVLVLKAKVQCELNITAQLQEGEGNCFPEWDGLICWPRGTVGKISAVPCPPYIYDFNHKGVAFRHCNPNGTWDFMHSLNKTWANYSDCLRFLQPDISIGKQEFFERLYVMYTVGYSISFGSLAVAILIIGYFRRLHCTRNYIHMHLFVSFMLRATSIFVKDRVVHAHIGVKELESLIMQDDPQNSIEATSVDKSQYIGCKIAVVMFIYFLATNYYWILVEGLYLHNLIFVAFFSDTKYLWGFILIGWGFPAAFVAAWAVARATLADARCWELSAGDIKWIYQAPILAAIGLNFILFLNTVRVLATKIWETNAVGHDTRKQYRKLAKSTLVLVLVFGVHYIVFVCLPHSFTGLGWEIRMHCELFFNSFQGFFVSIIYCYCNGEVQAEVKKMWSRWNLSVDWKRTPPCGSRRCGSVLTTVTHSTSSQSQVAASTRMVLISGKAAKIASRQPDSHITLPGYVWSNSEQDCLPHSFHEETKEDSGRQGDDILMEKPSRPMESNPDTEGCQGETEDVL</sequence>
<organism>
    <name type="scientific">Homo sapiens</name>
    <name type="common">Human</name>
    <dbReference type="NCBI Taxonomy" id="9606"/>
    <lineage>
        <taxon>Eukaryota</taxon>
        <taxon>Metazoa</taxon>
        <taxon>Chordata</taxon>
        <taxon>Craniata</taxon>
        <taxon>Vertebrata</taxon>
        <taxon>Euteleostomi</taxon>
        <taxon>Mammalia</taxon>
        <taxon>Eutheria</taxon>
        <taxon>Euarchontoglires</taxon>
        <taxon>Primates</taxon>
        <taxon>Haplorrhini</taxon>
        <taxon>Catarrhini</taxon>
        <taxon>Hominidae</taxon>
        <taxon>Homo</taxon>
    </lineage>
</organism>
<feature type="signal peptide" evidence="2">
    <location>
        <begin position="1"/>
        <end position="24"/>
    </location>
</feature>
<feature type="chain" id="PRO_0000012849" description="Parathyroid hormone 2 receptor">
    <location>
        <begin position="25"/>
        <end position="550"/>
    </location>
</feature>
<feature type="topological domain" description="Extracellular" evidence="2">
    <location>
        <begin position="27"/>
        <end position="145"/>
    </location>
</feature>
<feature type="transmembrane region" description="Helical; Name=1" evidence="2">
    <location>
        <begin position="146"/>
        <end position="169"/>
    </location>
</feature>
<feature type="topological domain" description="Cytoplasmic" evidence="2">
    <location>
        <begin position="170"/>
        <end position="176"/>
    </location>
</feature>
<feature type="transmembrane region" description="Helical; Name=2" evidence="2">
    <location>
        <begin position="177"/>
        <end position="196"/>
    </location>
</feature>
<feature type="topological domain" description="Extracellular" evidence="2">
    <location>
        <begin position="197"/>
        <end position="237"/>
    </location>
</feature>
<feature type="transmembrane region" description="Helical; Name=3" evidence="2">
    <location>
        <begin position="238"/>
        <end position="260"/>
    </location>
</feature>
<feature type="topological domain" description="Cytoplasmic" evidence="2">
    <location>
        <begin position="261"/>
        <end position="275"/>
    </location>
</feature>
<feature type="transmembrane region" description="Helical; Name=4" evidence="2">
    <location>
        <begin position="276"/>
        <end position="297"/>
    </location>
</feature>
<feature type="topological domain" description="Extracellular" evidence="2">
    <location>
        <begin position="298"/>
        <end position="316"/>
    </location>
</feature>
<feature type="transmembrane region" description="Helical; Name=5" evidence="2">
    <location>
        <begin position="317"/>
        <end position="337"/>
    </location>
</feature>
<feature type="topological domain" description="Cytoplasmic" evidence="2">
    <location>
        <begin position="338"/>
        <end position="364"/>
    </location>
</feature>
<feature type="transmembrane region" description="Helical; Name=6" evidence="2">
    <location>
        <begin position="365"/>
        <end position="383"/>
    </location>
</feature>
<feature type="topological domain" description="Extracellular" evidence="2">
    <location>
        <begin position="384"/>
        <end position="394"/>
    </location>
</feature>
<feature type="transmembrane region" description="Helical; Name=7" evidence="2">
    <location>
        <begin position="395"/>
        <end position="417"/>
    </location>
</feature>
<feature type="topological domain" description="Cytoplasmic" evidence="2">
    <location>
        <begin position="418"/>
        <end position="550"/>
    </location>
</feature>
<feature type="region of interest" description="Disordered" evidence="3">
    <location>
        <begin position="511"/>
        <end position="550"/>
    </location>
</feature>
<feature type="compositionally biased region" description="Basic and acidic residues" evidence="3">
    <location>
        <begin position="511"/>
        <end position="531"/>
    </location>
</feature>
<feature type="glycosylation site" description="N-linked (GlcNAc...) asparagine" evidence="2">
    <location>
        <position position="51"/>
    </location>
</feature>
<feature type="glycosylation site" description="N-linked (GlcNAc...) asparagine" evidence="2">
    <location>
        <position position="106"/>
    </location>
</feature>
<feature type="glycosylation site" description="N-linked (GlcNAc...) asparagine" evidence="2">
    <location>
        <position position="116"/>
    </location>
</feature>
<feature type="glycosylation site" description="N-linked (GlcNAc...) asparagine" evidence="2">
    <location>
        <position position="121"/>
    </location>
</feature>
<feature type="helix" evidence="6">
    <location>
        <begin position="34"/>
        <end position="56"/>
    </location>
</feature>
<feature type="strand" evidence="6">
    <location>
        <begin position="61"/>
        <end position="63"/>
    </location>
</feature>
<feature type="strand" evidence="6">
    <location>
        <begin position="80"/>
        <end position="85"/>
    </location>
</feature>
<feature type="strand" evidence="6">
    <location>
        <begin position="98"/>
        <end position="103"/>
    </location>
</feature>
<feature type="strand" evidence="6">
    <location>
        <begin position="107"/>
        <end position="109"/>
    </location>
</feature>
<feature type="strand" evidence="6">
    <location>
        <begin position="113"/>
        <end position="116"/>
    </location>
</feature>
<feature type="turn" evidence="6">
    <location>
        <begin position="123"/>
        <end position="125"/>
    </location>
</feature>
<feature type="helix" evidence="6">
    <location>
        <begin position="129"/>
        <end position="168"/>
    </location>
</feature>
<feature type="helix" evidence="6">
    <location>
        <begin position="175"/>
        <end position="204"/>
    </location>
</feature>
<feature type="helix" evidence="6">
    <location>
        <begin position="234"/>
        <end position="266"/>
    </location>
</feature>
<feature type="turn" evidence="6">
    <location>
        <begin position="272"/>
        <end position="275"/>
    </location>
</feature>
<feature type="helix" evidence="6">
    <location>
        <begin position="276"/>
        <end position="301"/>
    </location>
</feature>
<feature type="turn" evidence="6">
    <location>
        <begin position="312"/>
        <end position="315"/>
    </location>
</feature>
<feature type="helix" evidence="6">
    <location>
        <begin position="316"/>
        <end position="346"/>
    </location>
</feature>
<feature type="helix" evidence="6">
    <location>
        <begin position="354"/>
        <end position="372"/>
    </location>
</feature>
<feature type="helix" evidence="6">
    <location>
        <begin position="374"/>
        <end position="380"/>
    </location>
</feature>
<feature type="helix" evidence="6">
    <location>
        <begin position="389"/>
        <end position="413"/>
    </location>
</feature>
<feature type="helix" evidence="6">
    <location>
        <begin position="418"/>
        <end position="433"/>
    </location>
</feature>
<gene>
    <name type="primary">PTH2R</name>
    <name type="synonym">PTHR2</name>
</gene>
<accession>P49190</accession>
<accession>Q8N429</accession>
<dbReference type="EMBL" id="U25128">
    <property type="protein sequence ID" value="AAC50157.1"/>
    <property type="molecule type" value="mRNA"/>
</dbReference>
<dbReference type="EMBL" id="AY497546">
    <property type="protein sequence ID" value="AAR90849.1"/>
    <property type="molecule type" value="mRNA"/>
</dbReference>
<dbReference type="EMBL" id="BC036811">
    <property type="protein sequence ID" value="AAH36811.2"/>
    <property type="molecule type" value="mRNA"/>
</dbReference>
<dbReference type="EMBL" id="U47124">
    <property type="protein sequence ID" value="AAA96796.1"/>
    <property type="molecule type" value="Genomic_DNA"/>
</dbReference>
<dbReference type="EMBL" id="AH006647">
    <property type="protein sequence ID" value="AAC50767.1"/>
    <property type="molecule type" value="Genomic_DNA"/>
</dbReference>
<dbReference type="CCDS" id="CCDS2383.1"/>
<dbReference type="PIR" id="A57519">
    <property type="entry name" value="A57519"/>
</dbReference>
<dbReference type="RefSeq" id="NP_001296445.1">
    <property type="nucleotide sequence ID" value="NM_001309516.1"/>
</dbReference>
<dbReference type="RefSeq" id="NP_005039.1">
    <property type="nucleotide sequence ID" value="NM_005048.4"/>
</dbReference>
<dbReference type="PDB" id="7F16">
    <property type="method" value="EM"/>
    <property type="resolution" value="2.80 A"/>
    <property type="chains" value="R=24-442"/>
</dbReference>
<dbReference type="PDBsum" id="7F16"/>
<dbReference type="EMDB" id="EMD-31405"/>
<dbReference type="SMR" id="P49190"/>
<dbReference type="BioGRID" id="111718">
    <property type="interactions" value="154"/>
</dbReference>
<dbReference type="CORUM" id="P49190"/>
<dbReference type="FunCoup" id="P49190">
    <property type="interactions" value="851"/>
</dbReference>
<dbReference type="IntAct" id="P49190">
    <property type="interactions" value="114"/>
</dbReference>
<dbReference type="MINT" id="P49190"/>
<dbReference type="STRING" id="9606.ENSP00000272847"/>
<dbReference type="ChEMBL" id="CHEMBL4105836"/>
<dbReference type="DrugBank" id="DB05829">
    <property type="generic name" value="Parathyroid hormone"/>
</dbReference>
<dbReference type="DrugCentral" id="P49190"/>
<dbReference type="GuidetoPHARMACOLOGY" id="332"/>
<dbReference type="GlyCosmos" id="P49190">
    <property type="glycosylation" value="4 sites, No reported glycans"/>
</dbReference>
<dbReference type="GlyGen" id="P49190">
    <property type="glycosylation" value="4 sites"/>
</dbReference>
<dbReference type="iPTMnet" id="P49190"/>
<dbReference type="PhosphoSitePlus" id="P49190"/>
<dbReference type="BioMuta" id="PTH2R"/>
<dbReference type="DMDM" id="1346906"/>
<dbReference type="MassIVE" id="P49190"/>
<dbReference type="PaxDb" id="9606-ENSP00000272847"/>
<dbReference type="PeptideAtlas" id="P49190"/>
<dbReference type="TopDownProteomics" id="P49190"/>
<dbReference type="Antibodypedia" id="20012">
    <property type="antibodies" value="214 antibodies from 28 providers"/>
</dbReference>
<dbReference type="DNASU" id="5746"/>
<dbReference type="Ensembl" id="ENST00000272847.7">
    <property type="protein sequence ID" value="ENSP00000272847.2"/>
    <property type="gene ID" value="ENSG00000144407.10"/>
</dbReference>
<dbReference type="GeneID" id="5746"/>
<dbReference type="KEGG" id="hsa:5746"/>
<dbReference type="MANE-Select" id="ENST00000272847.7">
    <property type="protein sequence ID" value="ENSP00000272847.2"/>
    <property type="RefSeq nucleotide sequence ID" value="NM_005048.4"/>
    <property type="RefSeq protein sequence ID" value="NP_005039.1"/>
</dbReference>
<dbReference type="UCSC" id="uc002vdb.5">
    <property type="organism name" value="human"/>
</dbReference>
<dbReference type="AGR" id="HGNC:9609"/>
<dbReference type="CTD" id="5746"/>
<dbReference type="DisGeNET" id="5746"/>
<dbReference type="GeneCards" id="PTH2R"/>
<dbReference type="HGNC" id="HGNC:9609">
    <property type="gene designation" value="PTH2R"/>
</dbReference>
<dbReference type="HPA" id="ENSG00000144407">
    <property type="expression patterns" value="Tissue enhanced (retina)"/>
</dbReference>
<dbReference type="MIM" id="601469">
    <property type="type" value="gene"/>
</dbReference>
<dbReference type="neXtProt" id="NX_P49190"/>
<dbReference type="OpenTargets" id="ENSG00000144407"/>
<dbReference type="PharmGKB" id="PA162400333"/>
<dbReference type="VEuPathDB" id="HostDB:ENSG00000144407"/>
<dbReference type="eggNOG" id="KOG4564">
    <property type="taxonomic scope" value="Eukaryota"/>
</dbReference>
<dbReference type="GeneTree" id="ENSGT00940000159094"/>
<dbReference type="InParanoid" id="P49190"/>
<dbReference type="OMA" id="VDHWNKT"/>
<dbReference type="OrthoDB" id="6160250at2759"/>
<dbReference type="PAN-GO" id="P49190">
    <property type="GO annotations" value="5 GO annotations based on evolutionary models"/>
</dbReference>
<dbReference type="PhylomeDB" id="P49190"/>
<dbReference type="TreeFam" id="TF315710"/>
<dbReference type="PathwayCommons" id="P49190"/>
<dbReference type="Reactome" id="R-HSA-373080">
    <property type="pathway name" value="Class B/2 (Secretin family receptors)"/>
</dbReference>
<dbReference type="Reactome" id="R-HSA-418555">
    <property type="pathway name" value="G alpha (s) signalling events"/>
</dbReference>
<dbReference type="SignaLink" id="P49190"/>
<dbReference type="SIGNOR" id="P49190"/>
<dbReference type="BioGRID-ORCS" id="5746">
    <property type="hits" value="11 hits in 1152 CRISPR screens"/>
</dbReference>
<dbReference type="ChiTaRS" id="PTH2R">
    <property type="organism name" value="human"/>
</dbReference>
<dbReference type="GeneWiki" id="Parathyroid_hormone_2_receptor"/>
<dbReference type="GenomeRNAi" id="5746"/>
<dbReference type="Pharos" id="P49190">
    <property type="development level" value="Tchem"/>
</dbReference>
<dbReference type="PRO" id="PR:P49190"/>
<dbReference type="Proteomes" id="UP000005640">
    <property type="component" value="Chromosome 2"/>
</dbReference>
<dbReference type="RNAct" id="P49190">
    <property type="molecule type" value="protein"/>
</dbReference>
<dbReference type="Bgee" id="ENSG00000144407">
    <property type="expression patterns" value="Expressed in metanephros cortex and 108 other cell types or tissues"/>
</dbReference>
<dbReference type="ExpressionAtlas" id="P49190">
    <property type="expression patterns" value="baseline and differential"/>
</dbReference>
<dbReference type="GO" id="GO:0005886">
    <property type="term" value="C:plasma membrane"/>
    <property type="evidence" value="ECO:0000318"/>
    <property type="project" value="GO_Central"/>
</dbReference>
<dbReference type="GO" id="GO:0008528">
    <property type="term" value="F:G protein-coupled peptide receptor activity"/>
    <property type="evidence" value="ECO:0000318"/>
    <property type="project" value="GO_Central"/>
</dbReference>
<dbReference type="GO" id="GO:0004991">
    <property type="term" value="F:parathyroid hormone receptor activity"/>
    <property type="evidence" value="ECO:0000318"/>
    <property type="project" value="GO_Central"/>
</dbReference>
<dbReference type="GO" id="GO:0017046">
    <property type="term" value="F:peptide hormone binding"/>
    <property type="evidence" value="ECO:0000318"/>
    <property type="project" value="GO_Central"/>
</dbReference>
<dbReference type="GO" id="GO:0007188">
    <property type="term" value="P:adenylate cyclase-modulating G protein-coupled receptor signaling pathway"/>
    <property type="evidence" value="ECO:0000318"/>
    <property type="project" value="GO_Central"/>
</dbReference>
<dbReference type="GO" id="GO:0007166">
    <property type="term" value="P:cell surface receptor signaling pathway"/>
    <property type="evidence" value="ECO:0007669"/>
    <property type="project" value="InterPro"/>
</dbReference>
<dbReference type="GO" id="GO:0007186">
    <property type="term" value="P:G protein-coupled receptor signaling pathway"/>
    <property type="evidence" value="ECO:0000304"/>
    <property type="project" value="ProtInc"/>
</dbReference>
<dbReference type="GO" id="GO:0120162">
    <property type="term" value="P:positive regulation of cold-induced thermogenesis"/>
    <property type="evidence" value="ECO:0000250"/>
    <property type="project" value="YuBioLab"/>
</dbReference>
<dbReference type="CDD" id="cd15982">
    <property type="entry name" value="7tmB1_PTH2R"/>
    <property type="match status" value="1"/>
</dbReference>
<dbReference type="FunFam" id="1.20.1070.10:FF:000127">
    <property type="entry name" value="Parathyroid hormone 2 receptor"/>
    <property type="match status" value="1"/>
</dbReference>
<dbReference type="FunFam" id="4.10.1240.10:FF:000005">
    <property type="entry name" value="Parathyroid hormone/parathyroid hormone-related peptide receptor"/>
    <property type="match status" value="1"/>
</dbReference>
<dbReference type="Gene3D" id="4.10.1240.10">
    <property type="entry name" value="GPCR, family 2, extracellular hormone receptor domain"/>
    <property type="match status" value="1"/>
</dbReference>
<dbReference type="Gene3D" id="1.20.1070.10">
    <property type="entry name" value="Rhodopsin 7-helix transmembrane proteins"/>
    <property type="match status" value="1"/>
</dbReference>
<dbReference type="InterPro" id="IPR050332">
    <property type="entry name" value="GPCR_2"/>
</dbReference>
<dbReference type="InterPro" id="IPR017981">
    <property type="entry name" value="GPCR_2-like_7TM"/>
</dbReference>
<dbReference type="InterPro" id="IPR036445">
    <property type="entry name" value="GPCR_2_extracell_dom_sf"/>
</dbReference>
<dbReference type="InterPro" id="IPR001879">
    <property type="entry name" value="GPCR_2_extracellular_dom"/>
</dbReference>
<dbReference type="InterPro" id="IPR000832">
    <property type="entry name" value="GPCR_2_secretin-like"/>
</dbReference>
<dbReference type="InterPro" id="IPR017983">
    <property type="entry name" value="GPCR_2_secretin-like_CS"/>
</dbReference>
<dbReference type="PANTHER" id="PTHR45620:SF7">
    <property type="entry name" value="PARATHYROID HORMONE 2 RECEPTOR"/>
    <property type="match status" value="1"/>
</dbReference>
<dbReference type="PANTHER" id="PTHR45620">
    <property type="entry name" value="PDF RECEPTOR-LIKE PROTEIN-RELATED"/>
    <property type="match status" value="1"/>
</dbReference>
<dbReference type="Pfam" id="PF00002">
    <property type="entry name" value="7tm_2"/>
    <property type="match status" value="1"/>
</dbReference>
<dbReference type="Pfam" id="PF02793">
    <property type="entry name" value="HRM"/>
    <property type="match status" value="1"/>
</dbReference>
<dbReference type="PRINTS" id="PR00249">
    <property type="entry name" value="GPCRSECRETIN"/>
</dbReference>
<dbReference type="SMART" id="SM00008">
    <property type="entry name" value="HormR"/>
    <property type="match status" value="1"/>
</dbReference>
<dbReference type="SUPFAM" id="SSF81321">
    <property type="entry name" value="Family A G protein-coupled receptor-like"/>
    <property type="match status" value="1"/>
</dbReference>
<dbReference type="SUPFAM" id="SSF111418">
    <property type="entry name" value="Hormone receptor domain"/>
    <property type="match status" value="1"/>
</dbReference>
<dbReference type="PROSITE" id="PS00649">
    <property type="entry name" value="G_PROTEIN_RECEP_F2_1"/>
    <property type="match status" value="1"/>
</dbReference>
<dbReference type="PROSITE" id="PS00650">
    <property type="entry name" value="G_PROTEIN_RECEP_F2_2"/>
    <property type="match status" value="1"/>
</dbReference>
<dbReference type="PROSITE" id="PS50227">
    <property type="entry name" value="G_PROTEIN_RECEP_F2_3"/>
    <property type="match status" value="1"/>
</dbReference>
<dbReference type="PROSITE" id="PS50261">
    <property type="entry name" value="G_PROTEIN_RECEP_F2_4"/>
    <property type="match status" value="1"/>
</dbReference>
<comment type="function">
    <text evidence="1">This is a specific receptor for parathyroid hormone. The activity of this receptor is mediated by G proteins which activate adenylyl cyclase. PTH2R may be responsible for PTH effects in a number of physiological systems. It may play a significant role in pancreatic function. PTH2R presence in neurons indicates that it may function as a neurotransmitter receptor (By similarity).</text>
</comment>
<comment type="subunit">
    <text>Binds to TIPF39/TIP39.</text>
</comment>
<comment type="interaction">
    <interactant intactId="EBI-1045772">
        <id>P49190</id>
    </interactant>
    <interactant intactId="EBI-1176455">
        <id>P63172</id>
        <label>DYNLT1</label>
    </interactant>
    <organismsDiffer>false</organismsDiffer>
    <experiments>3</experiments>
</comment>
<comment type="interaction">
    <interactant intactId="EBI-1045772">
        <id>P49190</id>
    </interactant>
    <interactant intactId="EBI-740641">
        <id>Q9NP66</id>
        <label>HMG20A</label>
    </interactant>
    <organismsDiffer>false</organismsDiffer>
    <experiments>3</experiments>
</comment>
<comment type="subcellular location">
    <subcellularLocation>
        <location>Cell membrane</location>
        <topology>Multi-pass membrane protein</topology>
    </subcellularLocation>
</comment>
<comment type="tissue specificity">
    <text evidence="4">Expressed abundantly in brain and pancreas. Also expressed in the testis.</text>
</comment>
<comment type="similarity">
    <text evidence="5">Belongs to the G-protein coupled receptor 2 family.</text>
</comment>
<name>PTH2R_HUMAN</name>
<protein>
    <recommendedName>
        <fullName>Parathyroid hormone 2 receptor</fullName>
        <shortName>PTH2 receptor</shortName>
    </recommendedName>
</protein>